<reference key="1">
    <citation type="submission" date="1992-03" db="EMBL/GenBank/DDBJ databases">
        <title>Sequence analysis of HBV genomes isolated from patients with HBsAg negative chronic liver disease.</title>
        <authorList>
            <person name="Lai M.E."/>
            <person name="Mazzoleni A.P."/>
            <person name="Balestrieri A."/>
            <person name="Melis A."/>
            <person name="Porru A."/>
        </authorList>
    </citation>
    <scope>NUCLEOTIDE SEQUENCE [GENOMIC DNA]</scope>
</reference>
<reference key="2">
    <citation type="journal article" date="1996" name="Intervirology">
        <title>Functions of the large hepatitis B virus surface protein in viral particle morphogenesis.</title>
        <authorList>
            <person name="Bruss V."/>
            <person name="Gerhardt E."/>
            <person name="Vieluf K."/>
            <person name="Wunderlich G."/>
        </authorList>
    </citation>
    <scope>REVIEW</scope>
</reference>
<reference key="3">
    <citation type="journal article" date="1998" name="Adv. Exp. Med. Biol.">
        <title>Role of glycan processing in hepatitis B virus envelope protein trafficking.</title>
        <authorList>
            <person name="Block T.M."/>
            <person name="Lu X."/>
            <person name="Mehta A."/>
            <person name="Park J."/>
            <person name="Blumberg B.S."/>
            <person name="Dwek R."/>
        </authorList>
    </citation>
    <scope>REVIEW</scope>
</reference>
<reference key="4">
    <citation type="journal article" date="2004" name="Virus Res.">
        <title>Envelopment of the hepatitis B virus nucleocapsid.</title>
        <authorList>
            <person name="Bruss V."/>
        </authorList>
    </citation>
    <scope>REVIEW</scope>
</reference>
<reference key="5">
    <citation type="journal article" date="2006" name="Cancer Sci.">
        <title>Hepatitis B virus pre-S mutants, endoplasmic reticulum stress and hepatocarcinogenesis.</title>
        <authorList>
            <person name="Wang H.C."/>
            <person name="Huang W."/>
            <person name="Lai M.D."/>
            <person name="Su I.J."/>
        </authorList>
    </citation>
    <scope>REVIEW</scope>
</reference>
<proteinExistence type="evidence at protein level"/>
<gene>
    <name evidence="1" type="primary">S</name>
</gene>
<name>HBSAG_HBVD6</name>
<keyword id="KW-0007">Acetylation</keyword>
<keyword id="KW-0024">Alternative initiation</keyword>
<keyword id="KW-0025">Alternative splicing</keyword>
<keyword id="KW-1166">Caveolin-mediated endocytosis of virus by host</keyword>
<keyword id="KW-1170">Fusion of virus membrane with host endosomal membrane</keyword>
<keyword id="KW-1168">Fusion of virus membrane with host membrane</keyword>
<keyword id="KW-0325">Glycoprotein</keyword>
<keyword id="KW-0945">Host-virus interaction</keyword>
<keyword id="KW-0449">Lipoprotein</keyword>
<keyword id="KW-0472">Membrane</keyword>
<keyword id="KW-0519">Myristate</keyword>
<keyword id="KW-0812">Transmembrane</keyword>
<keyword id="KW-1133">Transmembrane helix</keyword>
<keyword id="KW-1161">Viral attachment to host cell</keyword>
<keyword id="KW-0261">Viral envelope protein</keyword>
<keyword id="KW-1162">Viral penetration into host cytoplasm</keyword>
<keyword id="KW-0946">Virion</keyword>
<keyword id="KW-1164">Virus endocytosis by host</keyword>
<keyword id="KW-1160">Virus entry into host cell</keyword>
<accession>Q67875</accession>
<sequence>MGQNLSTSNPLGFFPDHQLDPASRANTANPDWDFNPNKDTWPDANKDGAGAFGLGLTPPHGGLLGWSPQAQGILHTVPANPPPASTNRQTGRQPTPLSPPLRDTHPQAVQWNSTTFHQTLQDPRVRGLYFPAGGSSSGTVNPVPTTASPLSSIFSRIGDPVTNMENITSGFLGPLLVLQAGFFLLTRILTIPQSLDSWWTSLNFRGGTTVCLGQNSQSPTSNHSPTSCPPTCPGYRWMCLRGFIIFLFILLLCLIFLLVLLEYQGMLHVCPLIPGTTTTSTGPCKTCTTPAQGNSMFPSCCCTKTSDGNCTCIPIPSSWAFAKYLWEWASVRFSWLSLLVPFVQWFVGLSPTVWLSAIWMMWYWGPSLYSILSPFLPLLPIFFCLWVYI</sequence>
<feature type="initiator methionine" description="Removed; by host" evidence="1">
    <location>
        <position position="1"/>
    </location>
</feature>
<feature type="chain" id="PRO_0000319087" description="Large envelope protein" evidence="1">
    <location>
        <begin position="2"/>
        <end position="389"/>
    </location>
</feature>
<feature type="topological domain" description="Intravirion; in internal conformation" evidence="1">
    <location>
        <begin position="2"/>
        <end position="242"/>
    </location>
</feature>
<feature type="topological domain" description="Virion surface; in external conformation" evidence="1">
    <location>
        <begin position="2"/>
        <end position="170"/>
    </location>
</feature>
<feature type="transmembrane region" description="Helical; Name=TM1; Note=In external conformation" evidence="1">
    <location>
        <begin position="171"/>
        <end position="191"/>
    </location>
</feature>
<feature type="topological domain" description="Intravirion; in external conformation" evidence="1">
    <location>
        <begin position="192"/>
        <end position="242"/>
    </location>
</feature>
<feature type="transmembrane region" description="Helical; Name=TM2" evidence="1">
    <location>
        <begin position="243"/>
        <end position="263"/>
    </location>
</feature>
<feature type="topological domain" description="Virion surface" evidence="1">
    <location>
        <begin position="264"/>
        <end position="337"/>
    </location>
</feature>
<feature type="transmembrane region" description="Helical" evidence="1">
    <location>
        <begin position="338"/>
        <end position="358"/>
    </location>
</feature>
<feature type="topological domain" description="Intravirion" evidence="1">
    <location>
        <begin position="359"/>
        <end position="364"/>
    </location>
</feature>
<feature type="transmembrane region" description="Helical; Name=TM3" evidence="1">
    <location>
        <begin position="365"/>
        <end position="387"/>
    </location>
</feature>
<feature type="topological domain" description="Virion surface" evidence="1">
    <location>
        <begin position="388"/>
        <end position="389"/>
    </location>
</feature>
<feature type="region of interest" description="Disordered" evidence="2">
    <location>
        <begin position="1"/>
        <end position="54"/>
    </location>
</feature>
<feature type="region of interest" description="Pre-S" evidence="1">
    <location>
        <begin position="2"/>
        <end position="163"/>
    </location>
</feature>
<feature type="region of interest" description="Pre-S1" evidence="1">
    <location>
        <begin position="2"/>
        <end position="108"/>
    </location>
</feature>
<feature type="region of interest" description="Disordered" evidence="2">
    <location>
        <begin position="73"/>
        <end position="106"/>
    </location>
</feature>
<feature type="region of interest" description="Pre-S2" evidence="1">
    <location>
        <begin position="109"/>
        <end position="163"/>
    </location>
</feature>
<feature type="compositionally biased region" description="Polar residues" evidence="2">
    <location>
        <begin position="1"/>
        <end position="10"/>
    </location>
</feature>
<feature type="compositionally biased region" description="Polar residues" evidence="2">
    <location>
        <begin position="85"/>
        <end position="95"/>
    </location>
</feature>
<feature type="lipid moiety-binding region" description="N-myristoyl glycine; by host" evidence="1">
    <location>
        <position position="2"/>
    </location>
</feature>
<feature type="glycosylation site" description="N-linked (GlcNAc...) asparagine; by host" evidence="1">
    <location>
        <position position="309"/>
    </location>
</feature>
<feature type="splice variant" id="VSP_031410" description="In isoform S." evidence="3">
    <location>
        <begin position="1"/>
        <end position="163"/>
    </location>
</feature>
<organismHost>
    <name type="scientific">Homo sapiens</name>
    <name type="common">Human</name>
    <dbReference type="NCBI Taxonomy" id="9606"/>
</organismHost>
<organismHost>
    <name type="scientific">Pan troglodytes</name>
    <name type="common">Chimpanzee</name>
    <dbReference type="NCBI Taxonomy" id="9598"/>
</organismHost>
<organism>
    <name type="scientific">Hepatitis B virus genotype D subtype ayw (isolate Italy/CI/1992)</name>
    <name type="common">HBV-D</name>
    <dbReference type="NCBI Taxonomy" id="489489"/>
    <lineage>
        <taxon>Viruses</taxon>
        <taxon>Riboviria</taxon>
        <taxon>Pararnavirae</taxon>
        <taxon>Artverviricota</taxon>
        <taxon>Revtraviricetes</taxon>
        <taxon>Blubervirales</taxon>
        <taxon>Hepadnaviridae</taxon>
        <taxon>Orthohepadnavirus</taxon>
        <taxon>Hepatitis B virus</taxon>
        <taxon>hepatitis B virus genotype D</taxon>
    </lineage>
</organism>
<evidence type="ECO:0000255" key="1">
    <source>
        <dbReference type="HAMAP-Rule" id="MF_04075"/>
    </source>
</evidence>
<evidence type="ECO:0000256" key="2">
    <source>
        <dbReference type="SAM" id="MobiDB-lite"/>
    </source>
</evidence>
<evidence type="ECO:0000305" key="3"/>
<protein>
    <recommendedName>
        <fullName evidence="1">Large envelope protein</fullName>
    </recommendedName>
    <alternativeName>
        <fullName evidence="1">L glycoprotein</fullName>
    </alternativeName>
    <alternativeName>
        <fullName evidence="1">L-HBsAg</fullName>
        <shortName evidence="1">LHB</shortName>
    </alternativeName>
    <alternativeName>
        <fullName evidence="1">Large S protein</fullName>
    </alternativeName>
    <alternativeName>
        <fullName evidence="1">Large surface protein</fullName>
    </alternativeName>
    <alternativeName>
        <fullName evidence="1">Major surface antigen</fullName>
    </alternativeName>
</protein>
<comment type="function">
    <text evidence="1">The large envelope protein exists in two topological conformations, one which is termed 'external' or Le-HBsAg and the other 'internal' or Li-HBsAg. In its external conformation the protein attaches the virus to cell receptors and thereby initiating infection. This interaction determines the species specificity and liver tropism. This attachment induces virion internalization predominantly through caveolin-mediated endocytosis. The large envelope protein also assures fusion between virion membrane and endosomal membrane. In its internal conformation the protein plays a role in virion morphogenesis and mediates the contact with the nucleocapsid like a matrix protein.</text>
</comment>
<comment type="function">
    <text evidence="1">The middle envelope protein plays an important role in the budding of the virion. It is involved in the induction of budding in a nucleocapsid independent way. In this process the majority of envelope proteins bud to form subviral lipoprotein particles of 22 nm of diameter that do not contain a nucleocapsid.</text>
</comment>
<comment type="subunit">
    <text evidence="1">Li-HBsAg interacts with capsid protein and with HDV Large delta antigen. Isoform M associates with host chaperone CANX through its pre-S2 N glycan. This association may be essential for M proper secretion.</text>
</comment>
<comment type="subcellular location">
    <subcellularLocation>
        <location evidence="1">Virion membrane</location>
    </subcellularLocation>
</comment>
<comment type="alternative products">
    <event type="alternative splicing"/>
    <event type="alternative initiation"/>
    <isoform>
        <id>Q67875-1</id>
        <name>L</name>
        <name>Large envelope protein</name>
        <name>LHB</name>
        <name>L-HBsAg</name>
        <sequence type="displayed"/>
    </isoform>
    <isoform>
        <id>Q67875-2</id>
        <name>S</name>
        <name>Small envelope protein</name>
        <name>SHB</name>
        <name>S-HBsAg</name>
        <sequence type="described" ref="VSP_031410"/>
    </isoform>
</comment>
<comment type="domain">
    <text>The large envelope protein is synthesized with the pre-S region at the cytosolic side of the endoplasmic reticulum and, hence will be within the virion after budding. Therefore the pre-S region is not N-glycosylated. Later a post-translational translocation of N-terminal pre-S and TM1 domains occur in about 50% of proteins at the virion surface. These molecules change their topology by an unknown mechanism, resulting in exposure of pre-S region at virion surface.</text>
</comment>
<comment type="domain">
    <text evidence="1">The large envelope protein is synthesized with the pre-S region at the cytosolic side of the endoplasmic reticulum and, hence will be within the virion after budding. Therefore the pre-S region is not N-glycosylated. Later a post-translational translocation of N-terminal pre-S and TM1 domains occur in about 50% of proteins at the virion surface. These molecules change their topology by an unknown mechanism, resulting in exposure of pre-S region at virion surface. For isoform M in contrast, the pre-S2 region is translocated cotranslationally to the endoplasmic reticulum lumen and is N-glycosylated.</text>
</comment>
<comment type="PTM">
    <text evidence="1">Isoform M is N-terminally acetylated by host at a ratio of 90%, and N-glycosylated by host at the pre-S2 region.</text>
</comment>
<comment type="PTM">
    <text evidence="1">Myristoylated.</text>
</comment>
<comment type="biotechnology">
    <text>Systematic vaccination of individuals at risk of exposure to the virus has been the main method of controlling the morbidity and mortality associated with hepatitis B. The first hepatitis B vaccine was manufactured by the purification and inactivation of HBsAg obtained from the plasma of chronic hepatitis B virus carriers. The vaccine is now produced by recombinant DNA techniques and expression of the S isoform in yeast cells. The pre-S region do not seem to induce strong enough antigenic response.</text>
</comment>
<comment type="similarity">
    <text evidence="1">Belongs to the orthohepadnavirus major surface antigen family.</text>
</comment>
<dbReference type="EMBL" id="X65258">
    <property type="protein sequence ID" value="CAA46353.1"/>
    <property type="molecule type" value="Genomic_DNA"/>
</dbReference>
<dbReference type="PIR" id="JQ2054">
    <property type="entry name" value="JQ2054"/>
</dbReference>
<dbReference type="PIR" id="S20749">
    <property type="entry name" value="S20749"/>
</dbReference>
<dbReference type="SMR" id="Q67875"/>
<dbReference type="GlyCosmos" id="Q67875">
    <property type="glycosylation" value="1 site, No reported glycans"/>
</dbReference>
<dbReference type="Proteomes" id="UP000008282">
    <property type="component" value="Genome"/>
</dbReference>
<dbReference type="GO" id="GO:0016020">
    <property type="term" value="C:membrane"/>
    <property type="evidence" value="ECO:0007669"/>
    <property type="project" value="UniProtKB-UniRule"/>
</dbReference>
<dbReference type="GO" id="GO:0019031">
    <property type="term" value="C:viral envelope"/>
    <property type="evidence" value="ECO:0007669"/>
    <property type="project" value="UniProtKB-KW"/>
</dbReference>
<dbReference type="GO" id="GO:0055036">
    <property type="term" value="C:virion membrane"/>
    <property type="evidence" value="ECO:0007669"/>
    <property type="project" value="UniProtKB-SubCell"/>
</dbReference>
<dbReference type="GO" id="GO:0075513">
    <property type="term" value="P:caveolin-mediated endocytosis of virus by host cell"/>
    <property type="evidence" value="ECO:0007669"/>
    <property type="project" value="UniProtKB-KW"/>
</dbReference>
<dbReference type="GO" id="GO:0039654">
    <property type="term" value="P:fusion of virus membrane with host endosome membrane"/>
    <property type="evidence" value="ECO:0007669"/>
    <property type="project" value="UniProtKB-KW"/>
</dbReference>
<dbReference type="GO" id="GO:0019062">
    <property type="term" value="P:virion attachment to host cell"/>
    <property type="evidence" value="ECO:0007669"/>
    <property type="project" value="UniProtKB-UniRule"/>
</dbReference>
<dbReference type="HAMAP" id="MF_04075">
    <property type="entry name" value="HBV_HBSAG"/>
    <property type="match status" value="1"/>
</dbReference>
<dbReference type="InterPro" id="IPR000349">
    <property type="entry name" value="HBV_HBSAG"/>
</dbReference>
<dbReference type="Pfam" id="PF00695">
    <property type="entry name" value="vMSA"/>
    <property type="match status" value="1"/>
</dbReference>